<protein>
    <recommendedName>
        <fullName evidence="1">Translation initiation factor 5A</fullName>
    </recommendedName>
    <alternativeName>
        <fullName evidence="1">Hypusine-containing protein</fullName>
    </alternativeName>
    <alternativeName>
        <fullName evidence="1">eIF-5A</fullName>
    </alternativeName>
</protein>
<name>IF5A_PYRIL</name>
<sequence>MSTKYVEVGELKEGSYVVIDGEPCRVVEIEKSKTGKHGSAKARIVAIGVFDGGKRTLSLPVDAQIEVPIIEKFTAQVLSISGNVIQLMDMRDYKTIEVPIDYVEEEAKGRLAPGVEVEVWQILNRYKITRVK</sequence>
<dbReference type="EMBL" id="CP000504">
    <property type="protein sequence ID" value="ABL87759.1"/>
    <property type="molecule type" value="Genomic_DNA"/>
</dbReference>
<dbReference type="RefSeq" id="WP_011762335.1">
    <property type="nucleotide sequence ID" value="NC_008701.1"/>
</dbReference>
<dbReference type="SMR" id="A1RS27"/>
<dbReference type="STRING" id="384616.Pisl_0581"/>
<dbReference type="GeneID" id="4617552"/>
<dbReference type="KEGG" id="pis:Pisl_0581"/>
<dbReference type="eggNOG" id="arCOG04277">
    <property type="taxonomic scope" value="Archaea"/>
</dbReference>
<dbReference type="HOGENOM" id="CLU_102600_3_0_2"/>
<dbReference type="OrthoDB" id="23689at2157"/>
<dbReference type="Proteomes" id="UP000002595">
    <property type="component" value="Chromosome"/>
</dbReference>
<dbReference type="GO" id="GO:0005737">
    <property type="term" value="C:cytoplasm"/>
    <property type="evidence" value="ECO:0007669"/>
    <property type="project" value="UniProtKB-SubCell"/>
</dbReference>
<dbReference type="GO" id="GO:0043022">
    <property type="term" value="F:ribosome binding"/>
    <property type="evidence" value="ECO:0007669"/>
    <property type="project" value="InterPro"/>
</dbReference>
<dbReference type="GO" id="GO:0003723">
    <property type="term" value="F:RNA binding"/>
    <property type="evidence" value="ECO:0007669"/>
    <property type="project" value="InterPro"/>
</dbReference>
<dbReference type="GO" id="GO:0003746">
    <property type="term" value="F:translation elongation factor activity"/>
    <property type="evidence" value="ECO:0007669"/>
    <property type="project" value="InterPro"/>
</dbReference>
<dbReference type="GO" id="GO:0003743">
    <property type="term" value="F:translation initiation factor activity"/>
    <property type="evidence" value="ECO:0007669"/>
    <property type="project" value="UniProtKB-UniRule"/>
</dbReference>
<dbReference type="GO" id="GO:0045901">
    <property type="term" value="P:positive regulation of translational elongation"/>
    <property type="evidence" value="ECO:0007669"/>
    <property type="project" value="InterPro"/>
</dbReference>
<dbReference type="GO" id="GO:0045905">
    <property type="term" value="P:positive regulation of translational termination"/>
    <property type="evidence" value="ECO:0007669"/>
    <property type="project" value="InterPro"/>
</dbReference>
<dbReference type="CDD" id="cd04467">
    <property type="entry name" value="S1_aIF5A"/>
    <property type="match status" value="1"/>
</dbReference>
<dbReference type="FunFam" id="2.30.30.30:FF:000038">
    <property type="entry name" value="Translation initiation factor 5A"/>
    <property type="match status" value="1"/>
</dbReference>
<dbReference type="Gene3D" id="2.30.30.30">
    <property type="match status" value="1"/>
</dbReference>
<dbReference type="Gene3D" id="2.40.50.140">
    <property type="entry name" value="Nucleic acid-binding proteins"/>
    <property type="match status" value="1"/>
</dbReference>
<dbReference type="HAMAP" id="MF_00085">
    <property type="entry name" value="eIF_5A"/>
    <property type="match status" value="1"/>
</dbReference>
<dbReference type="InterPro" id="IPR001884">
    <property type="entry name" value="IF5A-like"/>
</dbReference>
<dbReference type="InterPro" id="IPR048670">
    <property type="entry name" value="IF5A-like_N"/>
</dbReference>
<dbReference type="InterPro" id="IPR012340">
    <property type="entry name" value="NA-bd_OB-fold"/>
</dbReference>
<dbReference type="InterPro" id="IPR014722">
    <property type="entry name" value="Rib_uL2_dom2"/>
</dbReference>
<dbReference type="InterPro" id="IPR019769">
    <property type="entry name" value="Trans_elong_IF5A_hypusine_site"/>
</dbReference>
<dbReference type="InterPro" id="IPR022847">
    <property type="entry name" value="Transl_elong_IF5A_arc"/>
</dbReference>
<dbReference type="InterPro" id="IPR020189">
    <property type="entry name" value="Transl_elong_IF5A_C"/>
</dbReference>
<dbReference type="InterPro" id="IPR008991">
    <property type="entry name" value="Translation_prot_SH3-like_sf"/>
</dbReference>
<dbReference type="NCBIfam" id="TIGR00037">
    <property type="entry name" value="eIF_5A"/>
    <property type="match status" value="1"/>
</dbReference>
<dbReference type="NCBIfam" id="NF003076">
    <property type="entry name" value="PRK03999.1"/>
    <property type="match status" value="1"/>
</dbReference>
<dbReference type="PANTHER" id="PTHR11673">
    <property type="entry name" value="TRANSLATION INITIATION FACTOR 5A FAMILY MEMBER"/>
    <property type="match status" value="1"/>
</dbReference>
<dbReference type="Pfam" id="PF01287">
    <property type="entry name" value="eIF-5a"/>
    <property type="match status" value="1"/>
</dbReference>
<dbReference type="Pfam" id="PF21485">
    <property type="entry name" value="IF5A-like_N"/>
    <property type="match status" value="1"/>
</dbReference>
<dbReference type="PIRSF" id="PIRSF003025">
    <property type="entry name" value="eIF5A"/>
    <property type="match status" value="1"/>
</dbReference>
<dbReference type="SMART" id="SM01376">
    <property type="entry name" value="eIF-5a"/>
    <property type="match status" value="1"/>
</dbReference>
<dbReference type="SUPFAM" id="SSF50249">
    <property type="entry name" value="Nucleic acid-binding proteins"/>
    <property type="match status" value="1"/>
</dbReference>
<dbReference type="SUPFAM" id="SSF50104">
    <property type="entry name" value="Translation proteins SH3-like domain"/>
    <property type="match status" value="1"/>
</dbReference>
<dbReference type="PROSITE" id="PS00302">
    <property type="entry name" value="IF5A_HYPUSINE"/>
    <property type="match status" value="1"/>
</dbReference>
<keyword id="KW-0963">Cytoplasm</keyword>
<keyword id="KW-0385">Hypusine</keyword>
<keyword id="KW-0396">Initiation factor</keyword>
<keyword id="KW-0648">Protein biosynthesis</keyword>
<evidence type="ECO:0000255" key="1">
    <source>
        <dbReference type="HAMAP-Rule" id="MF_00085"/>
    </source>
</evidence>
<organism>
    <name type="scientific">Pyrobaculum islandicum (strain DSM 4184 / JCM 9189 / GEO3)</name>
    <dbReference type="NCBI Taxonomy" id="384616"/>
    <lineage>
        <taxon>Archaea</taxon>
        <taxon>Thermoproteota</taxon>
        <taxon>Thermoprotei</taxon>
        <taxon>Thermoproteales</taxon>
        <taxon>Thermoproteaceae</taxon>
        <taxon>Pyrobaculum</taxon>
    </lineage>
</organism>
<feature type="chain" id="PRO_1000007918" description="Translation initiation factor 5A">
    <location>
        <begin position="1"/>
        <end position="132"/>
    </location>
</feature>
<feature type="modified residue" description="Hypusine" evidence="1">
    <location>
        <position position="36"/>
    </location>
</feature>
<proteinExistence type="inferred from homology"/>
<gene>
    <name type="primary">eIF5A</name>
    <name type="ordered locus">Pisl_0581</name>
</gene>
<comment type="function">
    <text evidence="1">Functions by promoting the formation of the first peptide bond.</text>
</comment>
<comment type="subcellular location">
    <subcellularLocation>
        <location evidence="1">Cytoplasm</location>
    </subcellularLocation>
</comment>
<comment type="similarity">
    <text evidence="1">Belongs to the eIF-5A family.</text>
</comment>
<reference key="1">
    <citation type="submission" date="2006-12" db="EMBL/GenBank/DDBJ databases">
        <title>Complete sequence of Pyrobaculum islandicum DSM 4184.</title>
        <authorList>
            <person name="Copeland A."/>
            <person name="Lucas S."/>
            <person name="Lapidus A."/>
            <person name="Barry K."/>
            <person name="Detter J.C."/>
            <person name="Glavina del Rio T."/>
            <person name="Dalin E."/>
            <person name="Tice H."/>
            <person name="Pitluck S."/>
            <person name="Meincke L."/>
            <person name="Brettin T."/>
            <person name="Bruce D."/>
            <person name="Han C."/>
            <person name="Tapia R."/>
            <person name="Gilna P."/>
            <person name="Schmutz J."/>
            <person name="Larimer F."/>
            <person name="Land M."/>
            <person name="Hauser L."/>
            <person name="Kyrpides N."/>
            <person name="Mikhailova N."/>
            <person name="Cozen A.E."/>
            <person name="Fitz-Gibbon S.T."/>
            <person name="House C.H."/>
            <person name="Saltikov C."/>
            <person name="Lowe T."/>
            <person name="Richardson P."/>
        </authorList>
    </citation>
    <scope>NUCLEOTIDE SEQUENCE [LARGE SCALE GENOMIC DNA]</scope>
    <source>
        <strain>DSM 4184 / JCM 9189 / GEO3</strain>
    </source>
</reference>
<accession>A1RS27</accession>